<organism>
    <name type="scientific">Staphylococcus aureus (strain bovine RF122 / ET3-1)</name>
    <dbReference type="NCBI Taxonomy" id="273036"/>
    <lineage>
        <taxon>Bacteria</taxon>
        <taxon>Bacillati</taxon>
        <taxon>Bacillota</taxon>
        <taxon>Bacilli</taxon>
        <taxon>Bacillales</taxon>
        <taxon>Staphylococcaceae</taxon>
        <taxon>Staphylococcus</taxon>
    </lineage>
</organism>
<keyword id="KW-0963">Cytoplasm</keyword>
<keyword id="KW-0441">Lipid A biosynthesis</keyword>
<keyword id="KW-0444">Lipid biosynthesis</keyword>
<keyword id="KW-0443">Lipid metabolism</keyword>
<keyword id="KW-0456">Lyase</keyword>
<sequence length="146" mass="16082">METIFDYNQIKQIIPHRQPFLLIDKVVEYEEGQRCVAIKQVSGNEPFFQGHFPEYAVMPGVLITEALAQTGAVAILNSEENKGKIALFAGIDKCRFKRQVVPGDTLTLEVEITKIKGPIGKGNAKATVDGQLACSCELTFAIQDVK</sequence>
<feature type="chain" id="PRO_0000230838" description="3-hydroxyacyl-[acyl-carrier-protein] dehydratase FabZ">
    <location>
        <begin position="1"/>
        <end position="146"/>
    </location>
</feature>
<feature type="active site" evidence="1">
    <location>
        <position position="51"/>
    </location>
</feature>
<gene>
    <name evidence="1" type="primary">fabZ</name>
    <name type="ordered locus">SAB1983c</name>
</gene>
<name>FABZ_STAAB</name>
<evidence type="ECO:0000255" key="1">
    <source>
        <dbReference type="HAMAP-Rule" id="MF_00406"/>
    </source>
</evidence>
<protein>
    <recommendedName>
        <fullName evidence="1">3-hydroxyacyl-[acyl-carrier-protein] dehydratase FabZ</fullName>
        <ecNumber evidence="1">4.2.1.59</ecNumber>
    </recommendedName>
    <alternativeName>
        <fullName evidence="1">(3R)-hydroxymyristoyl-[acyl-carrier-protein] dehydratase</fullName>
        <shortName evidence="1">(3R)-hydroxymyristoyl-ACP dehydrase</shortName>
    </alternativeName>
    <alternativeName>
        <fullName evidence="1">Beta-hydroxyacyl-ACP dehydratase</fullName>
    </alternativeName>
</protein>
<proteinExistence type="inferred from homology"/>
<accession>Q2YUK5</accession>
<comment type="function">
    <text evidence="1">Involved in unsaturated fatty acids biosynthesis. Catalyzes the dehydration of short chain beta-hydroxyacyl-ACPs and long chain saturated and unsaturated beta-hydroxyacyl-ACPs.</text>
</comment>
<comment type="catalytic activity">
    <reaction evidence="1">
        <text>a (3R)-hydroxyacyl-[ACP] = a (2E)-enoyl-[ACP] + H2O</text>
        <dbReference type="Rhea" id="RHEA:13097"/>
        <dbReference type="Rhea" id="RHEA-COMP:9925"/>
        <dbReference type="Rhea" id="RHEA-COMP:9945"/>
        <dbReference type="ChEBI" id="CHEBI:15377"/>
        <dbReference type="ChEBI" id="CHEBI:78784"/>
        <dbReference type="ChEBI" id="CHEBI:78827"/>
        <dbReference type="EC" id="4.2.1.59"/>
    </reaction>
</comment>
<comment type="subcellular location">
    <subcellularLocation>
        <location evidence="1">Cytoplasm</location>
    </subcellularLocation>
</comment>
<comment type="similarity">
    <text evidence="1">Belongs to the thioester dehydratase family. FabZ subfamily.</text>
</comment>
<reference key="1">
    <citation type="journal article" date="2007" name="PLoS ONE">
        <title>Molecular correlates of host specialization in Staphylococcus aureus.</title>
        <authorList>
            <person name="Herron-Olson L."/>
            <person name="Fitzgerald J.R."/>
            <person name="Musser J.M."/>
            <person name="Kapur V."/>
        </authorList>
    </citation>
    <scope>NUCLEOTIDE SEQUENCE [LARGE SCALE GENOMIC DNA]</scope>
    <source>
        <strain>bovine RF122 / ET3-1</strain>
    </source>
</reference>
<dbReference type="EC" id="4.2.1.59" evidence="1"/>
<dbReference type="EMBL" id="AJ938182">
    <property type="protein sequence ID" value="CAI81672.1"/>
    <property type="molecule type" value="Genomic_DNA"/>
</dbReference>
<dbReference type="RefSeq" id="WP_000447678.1">
    <property type="nucleotide sequence ID" value="NC_007622.1"/>
</dbReference>
<dbReference type="SMR" id="Q2YUK5"/>
<dbReference type="KEGG" id="sab:SAB1983c"/>
<dbReference type="HOGENOM" id="CLU_078912_3_0_9"/>
<dbReference type="GO" id="GO:0005737">
    <property type="term" value="C:cytoplasm"/>
    <property type="evidence" value="ECO:0007669"/>
    <property type="project" value="UniProtKB-SubCell"/>
</dbReference>
<dbReference type="GO" id="GO:0016020">
    <property type="term" value="C:membrane"/>
    <property type="evidence" value="ECO:0007669"/>
    <property type="project" value="GOC"/>
</dbReference>
<dbReference type="GO" id="GO:0019171">
    <property type="term" value="F:(3R)-hydroxyacyl-[acyl-carrier-protein] dehydratase activity"/>
    <property type="evidence" value="ECO:0007669"/>
    <property type="project" value="UniProtKB-EC"/>
</dbReference>
<dbReference type="GO" id="GO:0006633">
    <property type="term" value="P:fatty acid biosynthetic process"/>
    <property type="evidence" value="ECO:0007669"/>
    <property type="project" value="UniProtKB-UniRule"/>
</dbReference>
<dbReference type="GO" id="GO:0009245">
    <property type="term" value="P:lipid A biosynthetic process"/>
    <property type="evidence" value="ECO:0007669"/>
    <property type="project" value="UniProtKB-UniRule"/>
</dbReference>
<dbReference type="CDD" id="cd01288">
    <property type="entry name" value="FabZ"/>
    <property type="match status" value="1"/>
</dbReference>
<dbReference type="FunFam" id="3.10.129.10:FF:000001">
    <property type="entry name" value="3-hydroxyacyl-[acyl-carrier-protein] dehydratase FabZ"/>
    <property type="match status" value="1"/>
</dbReference>
<dbReference type="Gene3D" id="3.10.129.10">
    <property type="entry name" value="Hotdog Thioesterase"/>
    <property type="match status" value="1"/>
</dbReference>
<dbReference type="HAMAP" id="MF_00406">
    <property type="entry name" value="FabZ"/>
    <property type="match status" value="1"/>
</dbReference>
<dbReference type="InterPro" id="IPR013114">
    <property type="entry name" value="FabA_FabZ"/>
</dbReference>
<dbReference type="InterPro" id="IPR010084">
    <property type="entry name" value="FabZ"/>
</dbReference>
<dbReference type="InterPro" id="IPR029069">
    <property type="entry name" value="HotDog_dom_sf"/>
</dbReference>
<dbReference type="NCBIfam" id="TIGR01750">
    <property type="entry name" value="fabZ"/>
    <property type="match status" value="1"/>
</dbReference>
<dbReference type="NCBIfam" id="NF000582">
    <property type="entry name" value="PRK00006.1"/>
    <property type="match status" value="1"/>
</dbReference>
<dbReference type="PANTHER" id="PTHR30272">
    <property type="entry name" value="3-HYDROXYACYL-[ACYL-CARRIER-PROTEIN] DEHYDRATASE"/>
    <property type="match status" value="1"/>
</dbReference>
<dbReference type="PANTHER" id="PTHR30272:SF1">
    <property type="entry name" value="3-HYDROXYACYL-[ACYL-CARRIER-PROTEIN] DEHYDRATASE"/>
    <property type="match status" value="1"/>
</dbReference>
<dbReference type="Pfam" id="PF07977">
    <property type="entry name" value="FabA"/>
    <property type="match status" value="1"/>
</dbReference>
<dbReference type="SUPFAM" id="SSF54637">
    <property type="entry name" value="Thioesterase/thiol ester dehydrase-isomerase"/>
    <property type="match status" value="1"/>
</dbReference>